<proteinExistence type="inferred from homology"/>
<name>RPPH_STRM5</name>
<accession>B4SLD9</accession>
<sequence>MIDPDGYRPNVGIVLMRQDGQVFWARRVRRDGWQFPQGGMNTDETPVEAMYRELQEETGLLPEHVEVLGATPGWLRYKLPARAIRRNERQVCIGQKQVWFLLRLTGDESHVCLDHTDSPEFDHWRWVDFWYPVEHVVMFKRGVYARALRHLAPLAQGVAGQGVTAMPKSAAEAWMPGHTAGHDRPRKRPRSRGYWPKKAQGDVPPT</sequence>
<organism>
    <name type="scientific">Stenotrophomonas maltophilia (strain R551-3)</name>
    <dbReference type="NCBI Taxonomy" id="391008"/>
    <lineage>
        <taxon>Bacteria</taxon>
        <taxon>Pseudomonadati</taxon>
        <taxon>Pseudomonadota</taxon>
        <taxon>Gammaproteobacteria</taxon>
        <taxon>Lysobacterales</taxon>
        <taxon>Lysobacteraceae</taxon>
        <taxon>Stenotrophomonas</taxon>
        <taxon>Stenotrophomonas maltophilia group</taxon>
    </lineage>
</organism>
<reference key="1">
    <citation type="submission" date="2008-06" db="EMBL/GenBank/DDBJ databases">
        <title>Complete sequence of Stenotrophomonas maltophilia R551-3.</title>
        <authorList>
            <consortium name="US DOE Joint Genome Institute"/>
            <person name="Lucas S."/>
            <person name="Copeland A."/>
            <person name="Lapidus A."/>
            <person name="Glavina del Rio T."/>
            <person name="Dalin E."/>
            <person name="Tice H."/>
            <person name="Pitluck S."/>
            <person name="Chain P."/>
            <person name="Malfatti S."/>
            <person name="Shin M."/>
            <person name="Vergez L."/>
            <person name="Lang D."/>
            <person name="Schmutz J."/>
            <person name="Larimer F."/>
            <person name="Land M."/>
            <person name="Hauser L."/>
            <person name="Kyrpides N."/>
            <person name="Mikhailova N."/>
            <person name="Taghavi S."/>
            <person name="Monchy S."/>
            <person name="Newman L."/>
            <person name="Vangronsveld J."/>
            <person name="van der Lelie D."/>
            <person name="Richardson P."/>
        </authorList>
    </citation>
    <scope>NUCLEOTIDE SEQUENCE [LARGE SCALE GENOMIC DNA]</scope>
    <source>
        <strain>R551-3</strain>
    </source>
</reference>
<gene>
    <name evidence="1" type="primary">rppH</name>
    <name evidence="1" type="synonym">nudH</name>
    <name type="ordered locus">Smal_3709</name>
</gene>
<protein>
    <recommendedName>
        <fullName evidence="1">RNA pyrophosphohydrolase</fullName>
        <ecNumber evidence="1">3.6.1.-</ecNumber>
    </recommendedName>
    <alternativeName>
        <fullName evidence="1">(Di)nucleoside polyphosphate hydrolase</fullName>
    </alternativeName>
</protein>
<keyword id="KW-0378">Hydrolase</keyword>
<dbReference type="EC" id="3.6.1.-" evidence="1"/>
<dbReference type="EMBL" id="CP001111">
    <property type="protein sequence ID" value="ACF53408.1"/>
    <property type="molecule type" value="Genomic_DNA"/>
</dbReference>
<dbReference type="RefSeq" id="WP_012512308.1">
    <property type="nucleotide sequence ID" value="NC_011071.1"/>
</dbReference>
<dbReference type="SMR" id="B4SLD9"/>
<dbReference type="STRING" id="391008.Smal_3709"/>
<dbReference type="KEGG" id="smt:Smal_3709"/>
<dbReference type="eggNOG" id="COG1051">
    <property type="taxonomic scope" value="Bacteria"/>
</dbReference>
<dbReference type="HOGENOM" id="CLU_087195_3_1_6"/>
<dbReference type="OrthoDB" id="9816040at2"/>
<dbReference type="Proteomes" id="UP000001867">
    <property type="component" value="Chromosome"/>
</dbReference>
<dbReference type="GO" id="GO:0016462">
    <property type="term" value="F:pyrophosphatase activity"/>
    <property type="evidence" value="ECO:0007669"/>
    <property type="project" value="UniProtKB-ARBA"/>
</dbReference>
<dbReference type="CDD" id="cd03671">
    <property type="entry name" value="NUDIX_Ap4A_hydrolase_plant_like"/>
    <property type="match status" value="1"/>
</dbReference>
<dbReference type="FunFam" id="3.90.79.10:FF:000001">
    <property type="entry name" value="RNA pyrophosphohydrolase"/>
    <property type="match status" value="1"/>
</dbReference>
<dbReference type="Gene3D" id="3.90.79.10">
    <property type="entry name" value="Nucleoside Triphosphate Pyrophosphohydrolase"/>
    <property type="match status" value="1"/>
</dbReference>
<dbReference type="HAMAP" id="MF_00298">
    <property type="entry name" value="Nudix_RppH"/>
    <property type="match status" value="1"/>
</dbReference>
<dbReference type="InterPro" id="IPR015797">
    <property type="entry name" value="NUDIX_hydrolase-like_dom_sf"/>
</dbReference>
<dbReference type="InterPro" id="IPR020084">
    <property type="entry name" value="NUDIX_hydrolase_CS"/>
</dbReference>
<dbReference type="InterPro" id="IPR000086">
    <property type="entry name" value="NUDIX_hydrolase_dom"/>
</dbReference>
<dbReference type="InterPro" id="IPR022927">
    <property type="entry name" value="RppH"/>
</dbReference>
<dbReference type="NCBIfam" id="NF001937">
    <property type="entry name" value="PRK00714.1-4"/>
    <property type="match status" value="1"/>
</dbReference>
<dbReference type="NCBIfam" id="NF001938">
    <property type="entry name" value="PRK00714.1-5"/>
    <property type="match status" value="1"/>
</dbReference>
<dbReference type="PANTHER" id="PTHR43736">
    <property type="entry name" value="ADP-RIBOSE PYROPHOSPHATASE"/>
    <property type="match status" value="1"/>
</dbReference>
<dbReference type="PANTHER" id="PTHR43736:SF1">
    <property type="entry name" value="DIHYDRONEOPTERIN TRIPHOSPHATE DIPHOSPHATASE"/>
    <property type="match status" value="1"/>
</dbReference>
<dbReference type="Pfam" id="PF00293">
    <property type="entry name" value="NUDIX"/>
    <property type="match status" value="1"/>
</dbReference>
<dbReference type="SUPFAM" id="SSF55811">
    <property type="entry name" value="Nudix"/>
    <property type="match status" value="1"/>
</dbReference>
<dbReference type="PROSITE" id="PS51462">
    <property type="entry name" value="NUDIX"/>
    <property type="match status" value="1"/>
</dbReference>
<dbReference type="PROSITE" id="PS00893">
    <property type="entry name" value="NUDIX_BOX"/>
    <property type="match status" value="1"/>
</dbReference>
<comment type="function">
    <text evidence="1">Accelerates the degradation of transcripts by removing pyrophosphate from the 5'-end of triphosphorylated RNA, leading to a more labile monophosphorylated state that can stimulate subsequent ribonuclease cleavage.</text>
</comment>
<comment type="cofactor">
    <cofactor evidence="1">
        <name>a divalent metal cation</name>
        <dbReference type="ChEBI" id="CHEBI:60240"/>
    </cofactor>
</comment>
<comment type="similarity">
    <text evidence="1">Belongs to the Nudix hydrolase family. RppH subfamily.</text>
</comment>
<evidence type="ECO:0000255" key="1">
    <source>
        <dbReference type="HAMAP-Rule" id="MF_00298"/>
    </source>
</evidence>
<evidence type="ECO:0000256" key="2">
    <source>
        <dbReference type="SAM" id="MobiDB-lite"/>
    </source>
</evidence>
<feature type="chain" id="PRO_1000115301" description="RNA pyrophosphohydrolase">
    <location>
        <begin position="1"/>
        <end position="206"/>
    </location>
</feature>
<feature type="domain" description="Nudix hydrolase" evidence="1">
    <location>
        <begin position="6"/>
        <end position="149"/>
    </location>
</feature>
<feature type="region of interest" description="Disordered" evidence="2">
    <location>
        <begin position="175"/>
        <end position="206"/>
    </location>
</feature>
<feature type="short sequence motif" description="Nudix box">
    <location>
        <begin position="38"/>
        <end position="59"/>
    </location>
</feature>